<sequence length="135" mass="15376">MEFIIKAKGHKNVSATHKTTLEITKEDYLTPTGHCIIGIDADKSMTDFSEEFKEKLRNAKKIIVEIEVEGIKDTIIGEGHKDLILNHPTDMVIRKSNYICPRTLMINANKSAKDINREIVKKLKEGKELIFKIIV</sequence>
<feature type="chain" id="PRO_0000106740" description="Uncharacterized protein MJ0206">
    <location>
        <begin position="1"/>
        <end position="135"/>
    </location>
</feature>
<gene>
    <name type="ordered locus">MJ0206</name>
</gene>
<accession>Q57659</accession>
<organism>
    <name type="scientific">Methanocaldococcus jannaschii (strain ATCC 43067 / DSM 2661 / JAL-1 / JCM 10045 / NBRC 100440)</name>
    <name type="common">Methanococcus jannaschii</name>
    <dbReference type="NCBI Taxonomy" id="243232"/>
    <lineage>
        <taxon>Archaea</taxon>
        <taxon>Methanobacteriati</taxon>
        <taxon>Methanobacteriota</taxon>
        <taxon>Methanomada group</taxon>
        <taxon>Methanococci</taxon>
        <taxon>Methanococcales</taxon>
        <taxon>Methanocaldococcaceae</taxon>
        <taxon>Methanocaldococcus</taxon>
    </lineage>
</organism>
<proteinExistence type="predicted"/>
<name>Y206_METJA</name>
<protein>
    <recommendedName>
        <fullName>Uncharacterized protein MJ0206</fullName>
    </recommendedName>
</protein>
<dbReference type="EMBL" id="L77117">
    <property type="protein sequence ID" value="AAB98190.1"/>
    <property type="molecule type" value="Genomic_DNA"/>
</dbReference>
<dbReference type="PIR" id="G64325">
    <property type="entry name" value="G64325"/>
</dbReference>
<dbReference type="RefSeq" id="WP_010869701.1">
    <property type="nucleotide sequence ID" value="NC_000909.1"/>
</dbReference>
<dbReference type="SMR" id="Q57659"/>
<dbReference type="FunCoup" id="Q57659">
    <property type="interactions" value="1"/>
</dbReference>
<dbReference type="STRING" id="243232.MJ_0206"/>
<dbReference type="PaxDb" id="243232-MJ_0206"/>
<dbReference type="EnsemblBacteria" id="AAB98190">
    <property type="protein sequence ID" value="AAB98190"/>
    <property type="gene ID" value="MJ_0206"/>
</dbReference>
<dbReference type="GeneID" id="1451055"/>
<dbReference type="KEGG" id="mja:MJ_0206"/>
<dbReference type="eggNOG" id="arCOG04171">
    <property type="taxonomic scope" value="Archaea"/>
</dbReference>
<dbReference type="HOGENOM" id="CLU_135994_0_0_2"/>
<dbReference type="InParanoid" id="Q57659"/>
<dbReference type="OrthoDB" id="9265at2157"/>
<dbReference type="PhylomeDB" id="Q57659"/>
<dbReference type="Proteomes" id="UP000000805">
    <property type="component" value="Chromosome"/>
</dbReference>
<dbReference type="Gene3D" id="2.60.120.630">
    <property type="entry name" value="mth639 domain like"/>
    <property type="match status" value="1"/>
</dbReference>
<dbReference type="InterPro" id="IPR007171">
    <property type="entry name" value="DUF371"/>
</dbReference>
<dbReference type="InterPro" id="IPR023131">
    <property type="entry name" value="Mth639-like_dom_sf"/>
</dbReference>
<dbReference type="PANTHER" id="PTHR40696:SF1">
    <property type="entry name" value="DUF371 DOMAIN-CONTAINING PROTEIN"/>
    <property type="match status" value="1"/>
</dbReference>
<dbReference type="PANTHER" id="PTHR40696">
    <property type="entry name" value="DUF371 FAMILY PROTEIN"/>
    <property type="match status" value="1"/>
</dbReference>
<dbReference type="Pfam" id="PF04027">
    <property type="entry name" value="DUF371"/>
    <property type="match status" value="1"/>
</dbReference>
<reference key="1">
    <citation type="journal article" date="1996" name="Science">
        <title>Complete genome sequence of the methanogenic archaeon, Methanococcus jannaschii.</title>
        <authorList>
            <person name="Bult C.J."/>
            <person name="White O."/>
            <person name="Olsen G.J."/>
            <person name="Zhou L."/>
            <person name="Fleischmann R.D."/>
            <person name="Sutton G.G."/>
            <person name="Blake J.A."/>
            <person name="FitzGerald L.M."/>
            <person name="Clayton R.A."/>
            <person name="Gocayne J.D."/>
            <person name="Kerlavage A.R."/>
            <person name="Dougherty B.A."/>
            <person name="Tomb J.-F."/>
            <person name="Adams M.D."/>
            <person name="Reich C.I."/>
            <person name="Overbeek R."/>
            <person name="Kirkness E.F."/>
            <person name="Weinstock K.G."/>
            <person name="Merrick J.M."/>
            <person name="Glodek A."/>
            <person name="Scott J.L."/>
            <person name="Geoghagen N.S.M."/>
            <person name="Weidman J.F."/>
            <person name="Fuhrmann J.L."/>
            <person name="Nguyen D."/>
            <person name="Utterback T.R."/>
            <person name="Kelley J.M."/>
            <person name="Peterson J.D."/>
            <person name="Sadow P.W."/>
            <person name="Hanna M.C."/>
            <person name="Cotton M.D."/>
            <person name="Roberts K.M."/>
            <person name="Hurst M.A."/>
            <person name="Kaine B.P."/>
            <person name="Borodovsky M."/>
            <person name="Klenk H.-P."/>
            <person name="Fraser C.M."/>
            <person name="Smith H.O."/>
            <person name="Woese C.R."/>
            <person name="Venter J.C."/>
        </authorList>
    </citation>
    <scope>NUCLEOTIDE SEQUENCE [LARGE SCALE GENOMIC DNA]</scope>
    <source>
        <strain>ATCC 43067 / DSM 2661 / JAL-1 / JCM 10045 / NBRC 100440</strain>
    </source>
</reference>
<keyword id="KW-1185">Reference proteome</keyword>